<keyword id="KW-0011">Acute phase</keyword>
<keyword id="KW-0202">Cytokine</keyword>
<keyword id="KW-1015">Disulfide bond</keyword>
<keyword id="KW-0325">Glycoprotein</keyword>
<keyword id="KW-0339">Growth factor</keyword>
<keyword id="KW-0964">Secreted</keyword>
<keyword id="KW-0732">Signal</keyword>
<dbReference type="EMBL" id="DQ267937">
    <property type="protein sequence ID" value="ABB90401.1"/>
    <property type="molecule type" value="mRNA"/>
</dbReference>
<dbReference type="EMBL" id="DQ884914">
    <property type="protein sequence ID" value="ABJ53333.1"/>
    <property type="molecule type" value="Genomic_DNA"/>
</dbReference>
<dbReference type="RefSeq" id="XP_019946148.1">
    <property type="nucleotide sequence ID" value="XM_020090589.2"/>
</dbReference>
<dbReference type="SMR" id="A0S0B0"/>
<dbReference type="GlyCosmos" id="A0S0B0">
    <property type="glycosylation" value="1 site, No reported glycans"/>
</dbReference>
<dbReference type="GeneID" id="109631714"/>
<dbReference type="KEGG" id="pov:109631714"/>
<dbReference type="CTD" id="3569"/>
<dbReference type="OrthoDB" id="8943569at2759"/>
<dbReference type="GO" id="GO:0005615">
    <property type="term" value="C:extracellular space"/>
    <property type="evidence" value="ECO:0007669"/>
    <property type="project" value="UniProtKB-KW"/>
</dbReference>
<dbReference type="GO" id="GO:0005125">
    <property type="term" value="F:cytokine activity"/>
    <property type="evidence" value="ECO:0007669"/>
    <property type="project" value="UniProtKB-KW"/>
</dbReference>
<dbReference type="GO" id="GO:0008083">
    <property type="term" value="F:growth factor activity"/>
    <property type="evidence" value="ECO:0007669"/>
    <property type="project" value="UniProtKB-KW"/>
</dbReference>
<dbReference type="GO" id="GO:0005138">
    <property type="term" value="F:interleukin-6 receptor binding"/>
    <property type="evidence" value="ECO:0007669"/>
    <property type="project" value="InterPro"/>
</dbReference>
<dbReference type="GO" id="GO:0006953">
    <property type="term" value="P:acute-phase response"/>
    <property type="evidence" value="ECO:0007669"/>
    <property type="project" value="UniProtKB-KW"/>
</dbReference>
<dbReference type="GO" id="GO:0030154">
    <property type="term" value="P:cell differentiation"/>
    <property type="evidence" value="ECO:0007669"/>
    <property type="project" value="InterPro"/>
</dbReference>
<dbReference type="GO" id="GO:0042593">
    <property type="term" value="P:glucose homeostasis"/>
    <property type="evidence" value="ECO:0000250"/>
    <property type="project" value="UniProtKB"/>
</dbReference>
<dbReference type="GO" id="GO:0072574">
    <property type="term" value="P:hepatocyte proliferation"/>
    <property type="evidence" value="ECO:0000250"/>
    <property type="project" value="UniProtKB"/>
</dbReference>
<dbReference type="GO" id="GO:0006955">
    <property type="term" value="P:immune response"/>
    <property type="evidence" value="ECO:0007669"/>
    <property type="project" value="InterPro"/>
</dbReference>
<dbReference type="GO" id="GO:0070102">
    <property type="term" value="P:interleukin-6-mediated signaling pathway"/>
    <property type="evidence" value="ECO:0000250"/>
    <property type="project" value="UniProtKB"/>
</dbReference>
<dbReference type="GO" id="GO:0097421">
    <property type="term" value="P:liver regeneration"/>
    <property type="evidence" value="ECO:0000250"/>
    <property type="project" value="UniProtKB"/>
</dbReference>
<dbReference type="GO" id="GO:1904894">
    <property type="term" value="P:positive regulation of receptor signaling pathway via STAT"/>
    <property type="evidence" value="ECO:0000250"/>
    <property type="project" value="UniProtKB"/>
</dbReference>
<dbReference type="GO" id="GO:0070092">
    <property type="term" value="P:regulation of glucagon secretion"/>
    <property type="evidence" value="ECO:0000250"/>
    <property type="project" value="UniProtKB"/>
</dbReference>
<dbReference type="GO" id="GO:0050796">
    <property type="term" value="P:regulation of insulin secretion"/>
    <property type="evidence" value="ECO:0000250"/>
    <property type="project" value="UniProtKB"/>
</dbReference>
<dbReference type="GO" id="GO:0014823">
    <property type="term" value="P:response to activity"/>
    <property type="evidence" value="ECO:0000250"/>
    <property type="project" value="UniProtKB"/>
</dbReference>
<dbReference type="GO" id="GO:0010573">
    <property type="term" value="P:vascular endothelial growth factor production"/>
    <property type="evidence" value="ECO:0000250"/>
    <property type="project" value="UniProtKB"/>
</dbReference>
<dbReference type="Gene3D" id="1.20.1250.10">
    <property type="match status" value="1"/>
</dbReference>
<dbReference type="InterPro" id="IPR009079">
    <property type="entry name" value="4_helix_cytokine-like_core"/>
</dbReference>
<dbReference type="InterPro" id="IPR003574">
    <property type="entry name" value="IL-6-like"/>
</dbReference>
<dbReference type="InterPro" id="IPR030474">
    <property type="entry name" value="IL-6/GCSF/MGF"/>
</dbReference>
<dbReference type="PANTHER" id="PTHR48494">
    <property type="entry name" value="INTERLEUKIN-6"/>
    <property type="match status" value="1"/>
</dbReference>
<dbReference type="PANTHER" id="PTHR48494:SF1">
    <property type="entry name" value="INTERLEUKIN-6"/>
    <property type="match status" value="1"/>
</dbReference>
<dbReference type="Pfam" id="PF00489">
    <property type="entry name" value="IL6"/>
    <property type="match status" value="1"/>
</dbReference>
<dbReference type="PRINTS" id="PR00433">
    <property type="entry name" value="IL6GCSFMGF"/>
</dbReference>
<dbReference type="SMART" id="SM00126">
    <property type="entry name" value="IL6"/>
    <property type="match status" value="1"/>
</dbReference>
<dbReference type="SUPFAM" id="SSF47266">
    <property type="entry name" value="4-helical cytokines"/>
    <property type="match status" value="1"/>
</dbReference>
<reference key="1">
    <citation type="journal article" date="2007" name="Fish Shellfish Immunol.">
        <title>Molecular cloning and characterisation of the flounder (Paralichthys olivaceus) interleukin-6 gene.</title>
        <authorList>
            <person name="Nam B.-H."/>
            <person name="Byon J.-Y."/>
            <person name="Kim Y.-O."/>
            <person name="Park E.-M."/>
            <person name="Cho Y.-C."/>
            <person name="Cheong J."/>
        </authorList>
    </citation>
    <scope>NUCLEOTIDE SEQUENCE [GENOMIC DNA / MRNA]</scope>
    <scope>TISSUE SPECIFICITY</scope>
    <scope>INDUCTION</scope>
</reference>
<gene>
    <name type="primary">il6</name>
</gene>
<organism>
    <name type="scientific">Paralichthys olivaceus</name>
    <name type="common">Bastard halibut</name>
    <name type="synonym">Hippoglossus olivaceus</name>
    <dbReference type="NCBI Taxonomy" id="8255"/>
    <lineage>
        <taxon>Eukaryota</taxon>
        <taxon>Metazoa</taxon>
        <taxon>Chordata</taxon>
        <taxon>Craniata</taxon>
        <taxon>Vertebrata</taxon>
        <taxon>Euteleostomi</taxon>
        <taxon>Actinopterygii</taxon>
        <taxon>Neopterygii</taxon>
        <taxon>Teleostei</taxon>
        <taxon>Neoteleostei</taxon>
        <taxon>Acanthomorphata</taxon>
        <taxon>Carangaria</taxon>
        <taxon>Pleuronectiformes</taxon>
        <taxon>Pleuronectoidei</taxon>
        <taxon>Paralichthyidae</taxon>
        <taxon>Paralichthys</taxon>
    </lineage>
</organism>
<protein>
    <recommendedName>
        <fullName>Interleukin-6</fullName>
        <shortName>IL-6</shortName>
    </recommendedName>
</protein>
<comment type="function">
    <text evidence="2">Cytokine with a wide variety of biological functions in immunity, tissue regeneration, and metabolism. Binds to IL6R, then the complex associates to the signaling subunit IL6ST/gp130 to trigger the intracellular IL6-signaling pathway. The interaction with the membrane-bound IL6R and IL6ST stimulates 'classic signaling', whereas the binding of IL6 and soluble IL6R to IL6ST stimulates 'trans-signaling'. Alternatively, 'cluster signaling' occurs when membrane-bound IL6:IL6R complexes on transmitter cells activate IL6ST receptors on neighboring receiver cells.</text>
</comment>
<comment type="subunit">
    <text evidence="2">Component of a hexamer of two molecules each of IL6, IL6R and IL6ST; first binds to IL6R to associate with the signaling subunit IL6ST.</text>
</comment>
<comment type="subcellular location">
    <subcellularLocation>
        <location evidence="2">Secreted</location>
    </subcellularLocation>
</comment>
<comment type="tissue specificity">
    <text evidence="5">Expressed in kidney and spleen. Low expression in liver and gills.</text>
</comment>
<comment type="induction">
    <text evidence="5">By LPS.</text>
</comment>
<comment type="similarity">
    <text evidence="6">Belongs to the IL-6 superfamily.</text>
</comment>
<feature type="signal peptide" evidence="3">
    <location>
        <begin position="1"/>
        <end position="24"/>
    </location>
</feature>
<feature type="chain" id="PRO_0000387950" description="Interleukin-6">
    <location>
        <begin position="25"/>
        <end position="230"/>
    </location>
</feature>
<feature type="region of interest" description="Disordered" evidence="4">
    <location>
        <begin position="206"/>
        <end position="230"/>
    </location>
</feature>
<feature type="compositionally biased region" description="Basic and acidic residues" evidence="4">
    <location>
        <begin position="206"/>
        <end position="218"/>
    </location>
</feature>
<feature type="glycosylation site" description="N-linked (GlcNAc...) asparagine" evidence="3">
    <location>
        <position position="100"/>
    </location>
</feature>
<feature type="disulfide bond" evidence="1">
    <location>
        <begin position="96"/>
        <end position="106"/>
    </location>
</feature>
<proteinExistence type="evidence at transcript level"/>
<name>IL6_PAROL</name>
<sequence length="230" mass="26043">MASKHNADLSSAAMLAALLLCALGAPVEYEPTDSPAGDFSGEEQEVTPDLLSASPVWDLIIGVTAHHQKEFEDEFQQEVKYRFLNHYKLSSLPADCPSANFSKEACLQRLAEGLHTYMVLFKHVEKEYPSSSILLHARYHSGALIGLIKEKMRNPGQVTVPTSRQEQQLLQDMDNPSTFHRKMTAHNILRQLHNFLRNGKVAIRKREMPKQKRRKDDGIIPPIHPSYQMT</sequence>
<evidence type="ECO:0000250" key="1"/>
<evidence type="ECO:0000250" key="2">
    <source>
        <dbReference type="UniProtKB" id="P05231"/>
    </source>
</evidence>
<evidence type="ECO:0000255" key="3"/>
<evidence type="ECO:0000256" key="4">
    <source>
        <dbReference type="SAM" id="MobiDB-lite"/>
    </source>
</evidence>
<evidence type="ECO:0000269" key="5">
    <source>
    </source>
</evidence>
<evidence type="ECO:0000305" key="6"/>
<accession>A0S0B0</accession>